<organism>
    <name type="scientific">Bacillus subtilis (strain 168)</name>
    <dbReference type="NCBI Taxonomy" id="224308"/>
    <lineage>
        <taxon>Bacteria</taxon>
        <taxon>Bacillati</taxon>
        <taxon>Bacillota</taxon>
        <taxon>Bacilli</taxon>
        <taxon>Bacillales</taxon>
        <taxon>Bacillaceae</taxon>
        <taxon>Bacillus</taxon>
    </lineage>
</organism>
<accession>Q45600</accession>
<accession>Q794W6</accession>
<protein>
    <recommendedName>
        <fullName>Uncharacterized metallophosphoesterase-like protein YydB</fullName>
    </recommendedName>
</protein>
<feature type="chain" id="PRO_0000360889" description="Uncharacterized metallophosphoesterase-like protein YydB">
    <location>
        <begin position="1"/>
        <end position="481"/>
    </location>
</feature>
<keyword id="KW-1185">Reference proteome</keyword>
<name>YYDB_BACSU</name>
<reference key="1">
    <citation type="journal article" date="1997" name="DNA Res.">
        <title>Sequence analysis of the 36-kb region between gntZ and trnY genes of Bacillus subtilis genome.</title>
        <authorList>
            <person name="Kasahara Y."/>
            <person name="Nakai S."/>
            <person name="Ogasawara N."/>
        </authorList>
    </citation>
    <scope>NUCLEOTIDE SEQUENCE [GENOMIC DNA]</scope>
    <source>
        <strain>168</strain>
    </source>
</reference>
<reference key="2">
    <citation type="journal article" date="1997" name="Nature">
        <title>The complete genome sequence of the Gram-positive bacterium Bacillus subtilis.</title>
        <authorList>
            <person name="Kunst F."/>
            <person name="Ogasawara N."/>
            <person name="Moszer I."/>
            <person name="Albertini A.M."/>
            <person name="Alloni G."/>
            <person name="Azevedo V."/>
            <person name="Bertero M.G."/>
            <person name="Bessieres P."/>
            <person name="Bolotin A."/>
            <person name="Borchert S."/>
            <person name="Borriss R."/>
            <person name="Boursier L."/>
            <person name="Brans A."/>
            <person name="Braun M."/>
            <person name="Brignell S.C."/>
            <person name="Bron S."/>
            <person name="Brouillet S."/>
            <person name="Bruschi C.V."/>
            <person name="Caldwell B."/>
            <person name="Capuano V."/>
            <person name="Carter N.M."/>
            <person name="Choi S.-K."/>
            <person name="Codani J.-J."/>
            <person name="Connerton I.F."/>
            <person name="Cummings N.J."/>
            <person name="Daniel R.A."/>
            <person name="Denizot F."/>
            <person name="Devine K.M."/>
            <person name="Duesterhoeft A."/>
            <person name="Ehrlich S.D."/>
            <person name="Emmerson P.T."/>
            <person name="Entian K.-D."/>
            <person name="Errington J."/>
            <person name="Fabret C."/>
            <person name="Ferrari E."/>
            <person name="Foulger D."/>
            <person name="Fritz C."/>
            <person name="Fujita M."/>
            <person name="Fujita Y."/>
            <person name="Fuma S."/>
            <person name="Galizzi A."/>
            <person name="Galleron N."/>
            <person name="Ghim S.-Y."/>
            <person name="Glaser P."/>
            <person name="Goffeau A."/>
            <person name="Golightly E.J."/>
            <person name="Grandi G."/>
            <person name="Guiseppi G."/>
            <person name="Guy B.J."/>
            <person name="Haga K."/>
            <person name="Haiech J."/>
            <person name="Harwood C.R."/>
            <person name="Henaut A."/>
            <person name="Hilbert H."/>
            <person name="Holsappel S."/>
            <person name="Hosono S."/>
            <person name="Hullo M.-F."/>
            <person name="Itaya M."/>
            <person name="Jones L.-M."/>
            <person name="Joris B."/>
            <person name="Karamata D."/>
            <person name="Kasahara Y."/>
            <person name="Klaerr-Blanchard M."/>
            <person name="Klein C."/>
            <person name="Kobayashi Y."/>
            <person name="Koetter P."/>
            <person name="Koningstein G."/>
            <person name="Krogh S."/>
            <person name="Kumano M."/>
            <person name="Kurita K."/>
            <person name="Lapidus A."/>
            <person name="Lardinois S."/>
            <person name="Lauber J."/>
            <person name="Lazarevic V."/>
            <person name="Lee S.-M."/>
            <person name="Levine A."/>
            <person name="Liu H."/>
            <person name="Masuda S."/>
            <person name="Mauel C."/>
            <person name="Medigue C."/>
            <person name="Medina N."/>
            <person name="Mellado R.P."/>
            <person name="Mizuno M."/>
            <person name="Moestl D."/>
            <person name="Nakai S."/>
            <person name="Noback M."/>
            <person name="Noone D."/>
            <person name="O'Reilly M."/>
            <person name="Ogawa K."/>
            <person name="Ogiwara A."/>
            <person name="Oudega B."/>
            <person name="Park S.-H."/>
            <person name="Parro V."/>
            <person name="Pohl T.M."/>
            <person name="Portetelle D."/>
            <person name="Porwollik S."/>
            <person name="Prescott A.M."/>
            <person name="Presecan E."/>
            <person name="Pujic P."/>
            <person name="Purnelle B."/>
            <person name="Rapoport G."/>
            <person name="Rey M."/>
            <person name="Reynolds S."/>
            <person name="Rieger M."/>
            <person name="Rivolta C."/>
            <person name="Rocha E."/>
            <person name="Roche B."/>
            <person name="Rose M."/>
            <person name="Sadaie Y."/>
            <person name="Sato T."/>
            <person name="Scanlan E."/>
            <person name="Schleich S."/>
            <person name="Schroeter R."/>
            <person name="Scoffone F."/>
            <person name="Sekiguchi J."/>
            <person name="Sekowska A."/>
            <person name="Seror S.J."/>
            <person name="Serror P."/>
            <person name="Shin B.-S."/>
            <person name="Soldo B."/>
            <person name="Sorokin A."/>
            <person name="Tacconi E."/>
            <person name="Takagi T."/>
            <person name="Takahashi H."/>
            <person name="Takemaru K."/>
            <person name="Takeuchi M."/>
            <person name="Tamakoshi A."/>
            <person name="Tanaka T."/>
            <person name="Terpstra P."/>
            <person name="Tognoni A."/>
            <person name="Tosato V."/>
            <person name="Uchiyama S."/>
            <person name="Vandenbol M."/>
            <person name="Vannier F."/>
            <person name="Vassarotti A."/>
            <person name="Viari A."/>
            <person name="Wambutt R."/>
            <person name="Wedler E."/>
            <person name="Wedler H."/>
            <person name="Weitzenegger T."/>
            <person name="Winters P."/>
            <person name="Wipat A."/>
            <person name="Yamamoto H."/>
            <person name="Yamane K."/>
            <person name="Yasumoto K."/>
            <person name="Yata K."/>
            <person name="Yoshida K."/>
            <person name="Yoshikawa H.-F."/>
            <person name="Zumstein E."/>
            <person name="Yoshikawa H."/>
            <person name="Danchin A."/>
        </authorList>
    </citation>
    <scope>NUCLEOTIDE SEQUENCE [LARGE SCALE GENOMIC DNA]</scope>
    <source>
        <strain>168</strain>
    </source>
</reference>
<comment type="similarity">
    <text evidence="1">Belongs to the metallophosphoesterase superfamily.</text>
</comment>
<proteinExistence type="inferred from homology"/>
<sequence>MKVRFLQISDLHFQFQNYDTIVMRDKLLDFIEVLRRESDFDFLLLTGDIAHKGDVYNEDVKEYLNGIIKSMGLSKNNVHLVPGNHDISRDMTRTLLIDSIMKSPNPSEMLDKLDQKATNILVEGQRKFFDFYEDFMGVKYPEEDLHFLYQSEKYNVLSINTCLLSDKKGEEGTLLTAQMKLYKAIRKMNKEKNKGKVLNIAIGHHTLGCIESSERESIKAHFDDYFIDLYLAGHVHDSSFNITANTNENPFLELVSGAIIKDEYATPEFISVDVNLDNGETEVTYYIWNTEYKYWSKNNQGGRRLQEGKLNYKINRLESLIEKEIEDNDDKIDEDEFKSFIIDFHEYRESYKTFTSNFDNQIGLDKKFYDMKSGETFKRKFDSYSEYFGVINHIMDSTSYVSADKKELIAETIVDKYLEFHNQYNNGDEIFVKIVNEIYLECHSVLPYSKALTKKYIKILTCWCIYECEIFNDNKRSVKND</sequence>
<gene>
    <name type="primary">yydB</name>
    <name type="ordered locus">BSU40220</name>
</gene>
<evidence type="ECO:0000305" key="1"/>
<dbReference type="EMBL" id="D78193">
    <property type="protein sequence ID" value="BAA11280.1"/>
    <property type="molecule type" value="Genomic_DNA"/>
</dbReference>
<dbReference type="EMBL" id="AL009126">
    <property type="protein sequence ID" value="CAB16059.1"/>
    <property type="molecule type" value="Genomic_DNA"/>
</dbReference>
<dbReference type="PIR" id="A70091">
    <property type="entry name" value="A70091"/>
</dbReference>
<dbReference type="RefSeq" id="NP_391902.1">
    <property type="nucleotide sequence ID" value="NC_000964.3"/>
</dbReference>
<dbReference type="RefSeq" id="WP_003243883.1">
    <property type="nucleotide sequence ID" value="NZ_OZ025638.1"/>
</dbReference>
<dbReference type="SMR" id="Q45600"/>
<dbReference type="FunCoup" id="Q45600">
    <property type="interactions" value="50"/>
</dbReference>
<dbReference type="STRING" id="224308.BSU40220"/>
<dbReference type="jPOST" id="Q45600"/>
<dbReference type="PaxDb" id="224308-BSU40220"/>
<dbReference type="DNASU" id="937728"/>
<dbReference type="EnsemblBacteria" id="CAB16059">
    <property type="protein sequence ID" value="CAB16059"/>
    <property type="gene ID" value="BSU_40220"/>
</dbReference>
<dbReference type="GeneID" id="937728"/>
<dbReference type="KEGG" id="bsu:BSU40220"/>
<dbReference type="PATRIC" id="fig|224308.179.peg.4350"/>
<dbReference type="eggNOG" id="COG1409">
    <property type="taxonomic scope" value="Bacteria"/>
</dbReference>
<dbReference type="InParanoid" id="Q45600"/>
<dbReference type="OrthoDB" id="115870at2"/>
<dbReference type="BioCyc" id="BSUB:BSU40220-MONOMER"/>
<dbReference type="Proteomes" id="UP000001570">
    <property type="component" value="Chromosome"/>
</dbReference>
<dbReference type="GO" id="GO:0003677">
    <property type="term" value="F:DNA binding"/>
    <property type="evidence" value="ECO:0000318"/>
    <property type="project" value="GO_Central"/>
</dbReference>
<dbReference type="GO" id="GO:0004529">
    <property type="term" value="F:DNA exonuclease activity"/>
    <property type="evidence" value="ECO:0000318"/>
    <property type="project" value="GO_Central"/>
</dbReference>
<dbReference type="GO" id="GO:0006281">
    <property type="term" value="P:DNA repair"/>
    <property type="evidence" value="ECO:0000318"/>
    <property type="project" value="GO_Central"/>
</dbReference>
<dbReference type="CDD" id="cd00838">
    <property type="entry name" value="MPP_superfamily"/>
    <property type="match status" value="1"/>
</dbReference>
<dbReference type="Gene3D" id="3.60.21.10">
    <property type="match status" value="1"/>
</dbReference>
<dbReference type="InterPro" id="IPR004843">
    <property type="entry name" value="Calcineurin-like_PHP_ApaH"/>
</dbReference>
<dbReference type="InterPro" id="IPR050535">
    <property type="entry name" value="DNA_Repair-Maintenance_Comp"/>
</dbReference>
<dbReference type="InterPro" id="IPR029052">
    <property type="entry name" value="Metallo-depent_PP-like"/>
</dbReference>
<dbReference type="PANTHER" id="PTHR30337">
    <property type="entry name" value="COMPONENT OF ATP-DEPENDENT DSDNA EXONUCLEASE"/>
    <property type="match status" value="1"/>
</dbReference>
<dbReference type="PANTHER" id="PTHR30337:SF0">
    <property type="entry name" value="NUCLEASE SBCCD SUBUNIT D"/>
    <property type="match status" value="1"/>
</dbReference>
<dbReference type="Pfam" id="PF00149">
    <property type="entry name" value="Metallophos"/>
    <property type="match status" value="1"/>
</dbReference>
<dbReference type="SUPFAM" id="SSF56300">
    <property type="entry name" value="Metallo-dependent phosphatases"/>
    <property type="match status" value="1"/>
</dbReference>